<proteinExistence type="inferred from homology"/>
<sequence length="158" mass="17772">MPLLLSGKKFHNDLKTNKCLAIFAPLEGGYETRLLRRMRAKGFKTFITSARGLGDPEVFLLKLHGVRPPHLGHQSVGRNGALGEVQQVIPQASELFNENDKNKLLWLLEGQVLSQSELESLIEICTNDNKLTIVVEMGGSRKLEWKPLSNYILDEFES</sequence>
<feature type="chain" id="PRO_0000352220" description="NAD(P)H-quinone oxidoreductase subunit N">
    <location>
        <begin position="1"/>
        <end position="158"/>
    </location>
</feature>
<evidence type="ECO:0000255" key="1">
    <source>
        <dbReference type="HAMAP-Rule" id="MF_01353"/>
    </source>
</evidence>
<comment type="function">
    <text evidence="1">NDH-1 shuttles electrons from an unknown electron donor, via FMN and iron-sulfur (Fe-S) centers, to quinones in the respiratory and/or the photosynthetic chain. The immediate electron acceptor for the enzyme in this species is believed to be plastoquinone. Couples the redox reaction to proton translocation, and thus conserves the redox energy in a proton gradient. Cyanobacterial NDH-1 also plays a role in inorganic carbon-concentration.</text>
</comment>
<comment type="catalytic activity">
    <reaction evidence="1">
        <text>a plastoquinone + NADH + (n+1) H(+)(in) = a plastoquinol + NAD(+) + n H(+)(out)</text>
        <dbReference type="Rhea" id="RHEA:42608"/>
        <dbReference type="Rhea" id="RHEA-COMP:9561"/>
        <dbReference type="Rhea" id="RHEA-COMP:9562"/>
        <dbReference type="ChEBI" id="CHEBI:15378"/>
        <dbReference type="ChEBI" id="CHEBI:17757"/>
        <dbReference type="ChEBI" id="CHEBI:57540"/>
        <dbReference type="ChEBI" id="CHEBI:57945"/>
        <dbReference type="ChEBI" id="CHEBI:62192"/>
    </reaction>
</comment>
<comment type="catalytic activity">
    <reaction evidence="1">
        <text>a plastoquinone + NADPH + (n+1) H(+)(in) = a plastoquinol + NADP(+) + n H(+)(out)</text>
        <dbReference type="Rhea" id="RHEA:42612"/>
        <dbReference type="Rhea" id="RHEA-COMP:9561"/>
        <dbReference type="Rhea" id="RHEA-COMP:9562"/>
        <dbReference type="ChEBI" id="CHEBI:15378"/>
        <dbReference type="ChEBI" id="CHEBI:17757"/>
        <dbReference type="ChEBI" id="CHEBI:57783"/>
        <dbReference type="ChEBI" id="CHEBI:58349"/>
        <dbReference type="ChEBI" id="CHEBI:62192"/>
    </reaction>
</comment>
<comment type="subunit">
    <text evidence="1">NDH-1 can be composed of about 15 different subunits; different subcomplexes with different compositions have been identified which probably have different functions.</text>
</comment>
<comment type="subcellular location">
    <subcellularLocation>
        <location evidence="1">Cellular thylakoid membrane</location>
        <topology evidence="1">Peripheral membrane protein</topology>
        <orientation evidence="1">Cytoplasmic side</orientation>
    </subcellularLocation>
</comment>
<comment type="similarity">
    <text evidence="1">Belongs to the complex I NdhN subunit family.</text>
</comment>
<keyword id="KW-0472">Membrane</keyword>
<keyword id="KW-0520">NAD</keyword>
<keyword id="KW-0521">NADP</keyword>
<keyword id="KW-0618">Plastoquinone</keyword>
<keyword id="KW-0874">Quinone</keyword>
<keyword id="KW-0793">Thylakoid</keyword>
<keyword id="KW-1278">Translocase</keyword>
<keyword id="KW-0813">Transport</keyword>
<dbReference type="EC" id="7.1.1.-" evidence="1"/>
<dbReference type="EMBL" id="CP000551">
    <property type="protein sequence ID" value="ABM71049.1"/>
    <property type="molecule type" value="Genomic_DNA"/>
</dbReference>
<dbReference type="RefSeq" id="WP_011819171.1">
    <property type="nucleotide sequence ID" value="NC_008816.1"/>
</dbReference>
<dbReference type="SMR" id="A2BTD8"/>
<dbReference type="STRING" id="146891.A9601_17661"/>
<dbReference type="KEGG" id="pmb:A9601_17661"/>
<dbReference type="eggNOG" id="ENOG5033TWM">
    <property type="taxonomic scope" value="Bacteria"/>
</dbReference>
<dbReference type="HOGENOM" id="CLU_087432_0_0_3"/>
<dbReference type="OrthoDB" id="510798at2"/>
<dbReference type="Proteomes" id="UP000002590">
    <property type="component" value="Chromosome"/>
</dbReference>
<dbReference type="GO" id="GO:0031676">
    <property type="term" value="C:plasma membrane-derived thylakoid membrane"/>
    <property type="evidence" value="ECO:0007669"/>
    <property type="project" value="UniProtKB-SubCell"/>
</dbReference>
<dbReference type="GO" id="GO:0016655">
    <property type="term" value="F:oxidoreductase activity, acting on NAD(P)H, quinone or similar compound as acceptor"/>
    <property type="evidence" value="ECO:0007669"/>
    <property type="project" value="UniProtKB-UniRule"/>
</dbReference>
<dbReference type="GO" id="GO:0048038">
    <property type="term" value="F:quinone binding"/>
    <property type="evidence" value="ECO:0007669"/>
    <property type="project" value="UniProtKB-KW"/>
</dbReference>
<dbReference type="HAMAP" id="MF_01353">
    <property type="entry name" value="NDH1_NDH1N"/>
    <property type="match status" value="1"/>
</dbReference>
<dbReference type="InterPro" id="IPR020874">
    <property type="entry name" value="NAD(P)H-quinone_OxRdtase_su_N"/>
</dbReference>
<dbReference type="PANTHER" id="PTHR35515">
    <property type="entry name" value="NAD(P)H-QUINONE OXIDOREDUCTASE SUBUNIT N, CHLOROPLASTIC"/>
    <property type="match status" value="1"/>
</dbReference>
<dbReference type="PANTHER" id="PTHR35515:SF1">
    <property type="entry name" value="NAD(P)H-QUINONE OXIDOREDUCTASE SUBUNIT N, CHLOROPLASTIC"/>
    <property type="match status" value="1"/>
</dbReference>
<dbReference type="Pfam" id="PF11909">
    <property type="entry name" value="NdhN"/>
    <property type="match status" value="1"/>
</dbReference>
<accession>A2BTD8</accession>
<protein>
    <recommendedName>
        <fullName evidence="1">NAD(P)H-quinone oxidoreductase subunit N</fullName>
        <ecNumber evidence="1">7.1.1.-</ecNumber>
    </recommendedName>
    <alternativeName>
        <fullName evidence="1">NAD(P)H dehydrogenase I subunit N</fullName>
        <shortName evidence="1">NDH-1 subunit N</shortName>
        <shortName evidence="1">NDH-N</shortName>
    </alternativeName>
</protein>
<gene>
    <name evidence="1" type="primary">ndhN</name>
    <name type="ordered locus">A9601_17661</name>
</gene>
<name>NDHN_PROMS</name>
<organism>
    <name type="scientific">Prochlorococcus marinus (strain AS9601)</name>
    <dbReference type="NCBI Taxonomy" id="146891"/>
    <lineage>
        <taxon>Bacteria</taxon>
        <taxon>Bacillati</taxon>
        <taxon>Cyanobacteriota</taxon>
        <taxon>Cyanophyceae</taxon>
        <taxon>Synechococcales</taxon>
        <taxon>Prochlorococcaceae</taxon>
        <taxon>Prochlorococcus</taxon>
    </lineage>
</organism>
<reference key="1">
    <citation type="journal article" date="2007" name="PLoS Genet.">
        <title>Patterns and implications of gene gain and loss in the evolution of Prochlorococcus.</title>
        <authorList>
            <person name="Kettler G.C."/>
            <person name="Martiny A.C."/>
            <person name="Huang K."/>
            <person name="Zucker J."/>
            <person name="Coleman M.L."/>
            <person name="Rodrigue S."/>
            <person name="Chen F."/>
            <person name="Lapidus A."/>
            <person name="Ferriera S."/>
            <person name="Johnson J."/>
            <person name="Steglich C."/>
            <person name="Church G.M."/>
            <person name="Richardson P."/>
            <person name="Chisholm S.W."/>
        </authorList>
    </citation>
    <scope>NUCLEOTIDE SEQUENCE [LARGE SCALE GENOMIC DNA]</scope>
    <source>
        <strain>AS9601</strain>
    </source>
</reference>